<feature type="chain" id="PRO_0000285768" description="Protein SAND">
    <location>
        <begin position="1"/>
        <end position="520"/>
    </location>
</feature>
<feature type="region of interest" description="Disordered" evidence="1">
    <location>
        <begin position="1"/>
        <end position="43"/>
    </location>
</feature>
<feature type="region of interest" description="Disordered" evidence="1">
    <location>
        <begin position="55"/>
        <end position="79"/>
    </location>
</feature>
<feature type="region of interest" description="Disordered" evidence="1">
    <location>
        <begin position="93"/>
        <end position="114"/>
    </location>
</feature>
<feature type="compositionally biased region" description="Acidic residues" evidence="1">
    <location>
        <begin position="70"/>
        <end position="79"/>
    </location>
</feature>
<evidence type="ECO:0000256" key="1">
    <source>
        <dbReference type="SAM" id="MobiDB-lite"/>
    </source>
</evidence>
<evidence type="ECO:0000305" key="2"/>
<name>SAND_TAKRU</name>
<keyword id="KW-1185">Reference proteome</keyword>
<proteinExistence type="inferred from homology"/>
<accession>Q9YGN1</accession>
<protein>
    <recommendedName>
        <fullName>Protein SAND</fullName>
    </recommendedName>
</protein>
<dbReference type="EMBL" id="AJ010317">
    <property type="protein sequence ID" value="CAA09085.1"/>
    <property type="molecule type" value="Genomic_DNA"/>
</dbReference>
<dbReference type="PIR" id="T30808">
    <property type="entry name" value="T30808"/>
</dbReference>
<dbReference type="SMR" id="Q9YGN1"/>
<dbReference type="FunCoup" id="Q9YGN1">
    <property type="interactions" value="1619"/>
</dbReference>
<dbReference type="STRING" id="31033.ENSTRUP00000035652"/>
<dbReference type="Ensembl" id="ENSTRUT00000035780.3">
    <property type="protein sequence ID" value="ENSTRUP00000035652.2"/>
    <property type="gene ID" value="ENSTRUG00000013941.3"/>
</dbReference>
<dbReference type="GeneID" id="101071065"/>
<dbReference type="KEGG" id="tru:101071065"/>
<dbReference type="CTD" id="84315"/>
<dbReference type="eggNOG" id="KOG0997">
    <property type="taxonomic scope" value="Eukaryota"/>
</dbReference>
<dbReference type="GeneTree" id="ENSGT00390000006665"/>
<dbReference type="HOGENOM" id="CLU_014574_3_0_1"/>
<dbReference type="InParanoid" id="Q9YGN1"/>
<dbReference type="OMA" id="QQPFNAK"/>
<dbReference type="OrthoDB" id="272411at2759"/>
<dbReference type="TreeFam" id="TF314665"/>
<dbReference type="Proteomes" id="UP000005226">
    <property type="component" value="Chromosome 19"/>
</dbReference>
<dbReference type="GO" id="GO:0035658">
    <property type="term" value="C:Mon1-Ccz1 complex"/>
    <property type="evidence" value="ECO:0007669"/>
    <property type="project" value="TreeGrafter"/>
</dbReference>
<dbReference type="GO" id="GO:0006623">
    <property type="term" value="P:protein targeting to vacuole"/>
    <property type="evidence" value="ECO:0007669"/>
    <property type="project" value="InterPro"/>
</dbReference>
<dbReference type="GO" id="GO:0016192">
    <property type="term" value="P:vesicle-mediated transport"/>
    <property type="evidence" value="ECO:0007669"/>
    <property type="project" value="InterPro"/>
</dbReference>
<dbReference type="InterPro" id="IPR043972">
    <property type="entry name" value="FUZ/MON1/HPS1_longin_1"/>
</dbReference>
<dbReference type="InterPro" id="IPR043971">
    <property type="entry name" value="FUZ/MON1/HPS1_longin_2"/>
</dbReference>
<dbReference type="InterPro" id="IPR043970">
    <property type="entry name" value="FUZ/MON1/HPS1_longin_3"/>
</dbReference>
<dbReference type="InterPro" id="IPR004353">
    <property type="entry name" value="Mon1"/>
</dbReference>
<dbReference type="PANTHER" id="PTHR13027">
    <property type="entry name" value="SAND PROTEIN-RELATED"/>
    <property type="match status" value="1"/>
</dbReference>
<dbReference type="PANTHER" id="PTHR13027:SF14">
    <property type="entry name" value="VACUOLAR FUSION PROTEIN MON1 HOMOLOG A"/>
    <property type="match status" value="1"/>
</dbReference>
<dbReference type="Pfam" id="PF19036">
    <property type="entry name" value="Fuz_longin_1"/>
    <property type="match status" value="1"/>
</dbReference>
<dbReference type="Pfam" id="PF19037">
    <property type="entry name" value="Fuz_longin_2"/>
    <property type="match status" value="1"/>
</dbReference>
<dbReference type="Pfam" id="PF19038">
    <property type="entry name" value="Fuz_longin_3"/>
    <property type="match status" value="1"/>
</dbReference>
<dbReference type="PRINTS" id="PR01546">
    <property type="entry name" value="YEAST73DUF"/>
</dbReference>
<sequence length="520" mass="58834">MDGEAQNESVACEKATLAPVDRLRSNRAESPTPGLVEGTEPGAVQKSAFFAHAQSFEDLTAEAEEKAEQEGVVEDSGQTEDELQVLVGERTITEQHAQDVSPQSRSKEEDMSSEAWRSHRKHVFVLSEAGKPIYTRYGSEEALSSTMGVMMALVSFVESDKNTIRSIHADGCKVIFLAKSPLVLVGVSQTYQSDKELLRELQYIYYQIVSLLTLTQLNHIFQNKQNYDLRRLLAGSEYLTDNLLHRLDRDPGLLLSAVTCLPLSNSVRDVVSSSLQAAKAKNLVFSILLAGDRLVTLVRKKDQFLHHIDLHLVMNLVGSSSSFREGEGWTPICLPKFNTAGFFHAHISYLESASDLCLILVSTDREDFFNMSDCKQRFLERLTKRTAYQALKEALKCPSYSVEQVGIPELRHFLYKSKSSGLYTSPEFPELYQSDEEQERLMGLYQDLHSHLHHPVRPLRFFYRCTNKENLLAWVTNGFQLYLCFSPLGTKAMAVSAVNKLLKWIRKEEDRLFILSPLTY</sequence>
<organism>
    <name type="scientific">Takifugu rubripes</name>
    <name type="common">Japanese pufferfish</name>
    <name type="synonym">Fugu rubripes</name>
    <dbReference type="NCBI Taxonomy" id="31033"/>
    <lineage>
        <taxon>Eukaryota</taxon>
        <taxon>Metazoa</taxon>
        <taxon>Chordata</taxon>
        <taxon>Craniata</taxon>
        <taxon>Vertebrata</taxon>
        <taxon>Euteleostomi</taxon>
        <taxon>Actinopterygii</taxon>
        <taxon>Neopterygii</taxon>
        <taxon>Teleostei</taxon>
        <taxon>Neoteleostei</taxon>
        <taxon>Acanthomorphata</taxon>
        <taxon>Eupercaria</taxon>
        <taxon>Tetraodontiformes</taxon>
        <taxon>Tetradontoidea</taxon>
        <taxon>Tetraodontidae</taxon>
        <taxon>Takifugu</taxon>
    </lineage>
</organism>
<reference key="1">
    <citation type="journal article" date="1999" name="FEBS Lett.">
        <title>Three receptor genes for plasminogen related growth factors in the genome of the puffer fish Fugu rubripes.</title>
        <authorList>
            <person name="Cottage A."/>
            <person name="Clark M."/>
            <person name="Hawker K."/>
            <person name="Umrania Y."/>
            <person name="Wheller D."/>
            <person name="Bishop M."/>
            <person name="Elgar G."/>
        </authorList>
    </citation>
    <scope>NUCLEOTIDE SEQUENCE [GENOMIC DNA]</scope>
</reference>
<gene>
    <name type="primary">sand</name>
</gene>
<comment type="similarity">
    <text evidence="2">Belongs to the MON1/SAND family.</text>
</comment>